<comment type="function">
    <text evidence="3 5">Plays a role in the toxic effects of organotins (PubMed:15269288). Plays a role in endosomal maturation (PubMed:27015288).</text>
</comment>
<comment type="subunit">
    <text evidence="4">Monomer.</text>
</comment>
<comment type="subcellular location">
    <subcellularLocation>
        <location evidence="3 4">Mitochondrion outer membrane</location>
        <topology evidence="4">Single-pass membrane protein</topology>
    </subcellularLocation>
</comment>
<comment type="similarity">
    <text evidence="7">Belongs to the stannin family.</text>
</comment>
<feature type="chain" id="PRO_0000072014" description="Stannin">
    <location>
        <begin position="1"/>
        <end position="88"/>
    </location>
</feature>
<feature type="topological domain" description="Mitochondrial intermembrane" evidence="4">
    <location>
        <begin position="1"/>
        <end position="10"/>
    </location>
</feature>
<feature type="transmembrane region" description="Helical" evidence="2">
    <location>
        <begin position="11"/>
        <end position="31"/>
    </location>
</feature>
<feature type="topological domain" description="Cytoplasmic" evidence="4">
    <location>
        <begin position="32"/>
        <end position="88"/>
    </location>
</feature>
<feature type="modified residue" description="Phosphoserine" evidence="1">
    <location>
        <position position="49"/>
    </location>
</feature>
<feature type="sequence variant" id="VAR_018842" description="In dbSNP:rs8191328." evidence="6">
    <original>V</original>
    <variation>I</variation>
    <location>
        <position position="17"/>
    </location>
</feature>
<feature type="sequence variant" id="VAR_018843" description="In dbSNP:rs8191329." evidence="6">
    <original>G</original>
    <variation>S</variation>
    <location>
        <position position="88"/>
    </location>
</feature>
<feature type="turn" evidence="8">
    <location>
        <begin position="5"/>
        <end position="8"/>
    </location>
</feature>
<feature type="helix" evidence="8">
    <location>
        <begin position="9"/>
        <end position="33"/>
    </location>
</feature>
<feature type="turn" evidence="8">
    <location>
        <begin position="34"/>
        <end position="36"/>
    </location>
</feature>
<feature type="turn" evidence="8">
    <location>
        <begin position="48"/>
        <end position="54"/>
    </location>
</feature>
<feature type="strand" evidence="8">
    <location>
        <begin position="55"/>
        <end position="57"/>
    </location>
</feature>
<feature type="helix" evidence="8">
    <location>
        <begin position="60"/>
        <end position="79"/>
    </location>
</feature>
<feature type="turn" evidence="8">
    <location>
        <begin position="84"/>
        <end position="86"/>
    </location>
</feature>
<evidence type="ECO:0000250" key="1">
    <source>
        <dbReference type="UniProtKB" id="P61807"/>
    </source>
</evidence>
<evidence type="ECO:0000255" key="2"/>
<evidence type="ECO:0000269" key="3">
    <source>
    </source>
</evidence>
<evidence type="ECO:0000269" key="4">
    <source>
    </source>
</evidence>
<evidence type="ECO:0000269" key="5">
    <source>
    </source>
</evidence>
<evidence type="ECO:0000269" key="6">
    <source ref="4"/>
</evidence>
<evidence type="ECO:0000305" key="7"/>
<evidence type="ECO:0007829" key="8">
    <source>
        <dbReference type="PDB" id="1ZZA"/>
    </source>
</evidence>
<reference key="1">
    <citation type="journal article" date="1998" name="Mamm. Genome">
        <title>Chromosomal localization and characterization of the stannin (Snn) gene.</title>
        <authorList>
            <person name="Dejneka N.S."/>
            <person name="Polavarapu R."/>
            <person name="Deng X."/>
            <person name="Martin-Deleon P.A."/>
            <person name="Billingsley M.L."/>
        </authorList>
    </citation>
    <scope>NUCLEOTIDE SEQUENCE [MRNA]</scope>
    <source>
        <tissue>Brain</tissue>
    </source>
</reference>
<reference key="2">
    <citation type="journal article" date="1999" name="Blood">
        <title>Vascular endothelial genes that are responsive to tumor necrosis factor-alpha in vitro are expressed in atherosclerotic lesions, including inhibitor of apoptosis protein-1, stannin, and two novel genes.</title>
        <authorList>
            <person name="Horrevoets A.J.G."/>
            <person name="Fontijn R.D."/>
            <person name="van Zonneveld A.J."/>
            <person name="de Vries C.J.M."/>
            <person name="ten Cate J.W."/>
            <person name="Pannekoek H."/>
        </authorList>
    </citation>
    <scope>NUCLEOTIDE SEQUENCE [MRNA]</scope>
    <source>
        <tissue>Endothelial cell</tissue>
    </source>
</reference>
<reference key="3">
    <citation type="journal article" date="2007" name="BMC Genomics">
        <title>The full-ORF clone resource of the German cDNA consortium.</title>
        <authorList>
            <person name="Bechtel S."/>
            <person name="Rosenfelder H."/>
            <person name="Duda A."/>
            <person name="Schmidt C.P."/>
            <person name="Ernst U."/>
            <person name="Wellenreuther R."/>
            <person name="Mehrle A."/>
            <person name="Schuster C."/>
            <person name="Bahr A."/>
            <person name="Bloecker H."/>
            <person name="Heubner D."/>
            <person name="Hoerlein A."/>
            <person name="Michel G."/>
            <person name="Wedler H."/>
            <person name="Koehrer K."/>
            <person name="Ottenwaelder B."/>
            <person name="Poustka A."/>
            <person name="Wiemann S."/>
            <person name="Schupp I."/>
        </authorList>
    </citation>
    <scope>NUCLEOTIDE SEQUENCE [LARGE SCALE MRNA]</scope>
    <source>
        <tissue>Amygdala</tissue>
    </source>
</reference>
<reference key="4">
    <citation type="submission" date="2003-06" db="EMBL/GenBank/DDBJ databases">
        <authorList>
            <consortium name="NIEHS SNPs program"/>
        </authorList>
    </citation>
    <scope>NUCLEOTIDE SEQUENCE [GENOMIC DNA]</scope>
    <scope>VARIANTS ILE-17 AND SER-88</scope>
</reference>
<reference key="5">
    <citation type="submission" date="2004-06" db="EMBL/GenBank/DDBJ databases">
        <title>Cloning of human full open reading frames in Gateway(TM) system entry vector (pDONR201).</title>
        <authorList>
            <person name="Ebert L."/>
            <person name="Schick M."/>
            <person name="Neubert P."/>
            <person name="Schatten R."/>
            <person name="Henze S."/>
            <person name="Korn B."/>
        </authorList>
    </citation>
    <scope>NUCLEOTIDE SEQUENCE [LARGE SCALE MRNA]</scope>
</reference>
<reference key="6">
    <citation type="submission" date="2005-09" db="EMBL/GenBank/DDBJ databases">
        <authorList>
            <person name="Mural R.J."/>
            <person name="Istrail S."/>
            <person name="Sutton G.G."/>
            <person name="Florea L."/>
            <person name="Halpern A.L."/>
            <person name="Mobarry C.M."/>
            <person name="Lippert R."/>
            <person name="Walenz B."/>
            <person name="Shatkay H."/>
            <person name="Dew I."/>
            <person name="Miller J.R."/>
            <person name="Flanigan M.J."/>
            <person name="Edwards N.J."/>
            <person name="Bolanos R."/>
            <person name="Fasulo D."/>
            <person name="Halldorsson B.V."/>
            <person name="Hannenhalli S."/>
            <person name="Turner R."/>
            <person name="Yooseph S."/>
            <person name="Lu F."/>
            <person name="Nusskern D.R."/>
            <person name="Shue B.C."/>
            <person name="Zheng X.H."/>
            <person name="Zhong F."/>
            <person name="Delcher A.L."/>
            <person name="Huson D.H."/>
            <person name="Kravitz S.A."/>
            <person name="Mouchard L."/>
            <person name="Reinert K."/>
            <person name="Remington K.A."/>
            <person name="Clark A.G."/>
            <person name="Waterman M.S."/>
            <person name="Eichler E.E."/>
            <person name="Adams M.D."/>
            <person name="Hunkapiller M.W."/>
            <person name="Myers E.W."/>
            <person name="Venter J.C."/>
        </authorList>
    </citation>
    <scope>NUCLEOTIDE SEQUENCE [LARGE SCALE GENOMIC DNA]</scope>
</reference>
<reference key="7">
    <citation type="journal article" date="2004" name="Genome Res.">
        <title>The status, quality, and expansion of the NIH full-length cDNA project: the Mammalian Gene Collection (MGC).</title>
        <authorList>
            <consortium name="The MGC Project Team"/>
        </authorList>
    </citation>
    <scope>NUCLEOTIDE SEQUENCE [LARGE SCALE MRNA]</scope>
    <source>
        <tissue>Brain</tissue>
        <tissue>Testis</tissue>
    </source>
</reference>
<reference key="8">
    <citation type="journal article" date="2004" name="Mol. Pharmacol.">
        <title>Stannin, a protein that localizes to the mitochondria and sensitizes NIH-3T3 cells to trimethyltin and dimethyltin toxicity.</title>
        <authorList>
            <person name="Davidson C.E."/>
            <person name="Reese B.E."/>
            <person name="Billingsley M.L."/>
            <person name="Yun J.K."/>
        </authorList>
    </citation>
    <scope>FUNCTION</scope>
    <scope>SUBCELLULAR LOCATION</scope>
</reference>
<reference key="9">
    <citation type="journal article" date="2016" name="PLoS Biol.">
        <title>Hemotin, a regulator of phagocytosis encoded by a small ORF and conserved across metazoans.</title>
        <authorList>
            <person name="Pueyo J.I."/>
            <person name="Magny E.G."/>
            <person name="Sampson C.J."/>
            <person name="Amin U."/>
            <person name="Evans I.R."/>
            <person name="Bishop S.A."/>
            <person name="Couso J.P."/>
        </authorList>
    </citation>
    <scope>FUNCTION</scope>
</reference>
<reference key="10">
    <citation type="journal article" date="2005" name="J. Mol. Biol.">
        <title>Structure, dynamics, and membrane topology of stannin: a mediator of neuronal cell apoptosis induced by trimethyltin chloride.</title>
        <authorList>
            <person name="Buck-Koehntop B.A."/>
            <person name="Mascioni A."/>
            <person name="Buffy J.J."/>
            <person name="Veglia G."/>
        </authorList>
    </citation>
    <scope>STRUCTURE BY NMR</scope>
    <scope>SUBUNIT</scope>
    <scope>SUBCELLULAR LOCATION</scope>
    <scope>TOPOLOGY</scope>
</reference>
<accession>O75324</accession>
<accession>D3DUG4</accession>
<accession>Q6FGI0</accession>
<organism>
    <name type="scientific">Homo sapiens</name>
    <name type="common">Human</name>
    <dbReference type="NCBI Taxonomy" id="9606"/>
    <lineage>
        <taxon>Eukaryota</taxon>
        <taxon>Metazoa</taxon>
        <taxon>Chordata</taxon>
        <taxon>Craniata</taxon>
        <taxon>Vertebrata</taxon>
        <taxon>Euteleostomi</taxon>
        <taxon>Mammalia</taxon>
        <taxon>Eutheria</taxon>
        <taxon>Euarchontoglires</taxon>
        <taxon>Primates</taxon>
        <taxon>Haplorrhini</taxon>
        <taxon>Catarrhini</taxon>
        <taxon>Hominidae</taxon>
        <taxon>Homo</taxon>
    </lineage>
</organism>
<proteinExistence type="evidence at protein level"/>
<protein>
    <recommendedName>
        <fullName>Stannin</fullName>
    </recommendedName>
    <alternativeName>
        <fullName>AG8_1</fullName>
    </alternativeName>
</protein>
<gene>
    <name type="primary">SNN</name>
</gene>
<keyword id="KW-0002">3D-structure</keyword>
<keyword id="KW-0472">Membrane</keyword>
<keyword id="KW-0496">Mitochondrion</keyword>
<keyword id="KW-1000">Mitochondrion outer membrane</keyword>
<keyword id="KW-0597">Phosphoprotein</keyword>
<keyword id="KW-1267">Proteomics identification</keyword>
<keyword id="KW-1185">Reference proteome</keyword>
<keyword id="KW-0812">Transmembrane</keyword>
<keyword id="KW-1133">Transmembrane helix</keyword>
<sequence>MSIMDHSPTTGVVTVIVILIAIAALGALILGCWCYLRLQRISQSEDEESIVGDGETKEPFLLVQYSAKGPCVERKAKLMTPNGPEVHG</sequence>
<dbReference type="EMBL" id="AF030196">
    <property type="protein sequence ID" value="AAC28427.1"/>
    <property type="molecule type" value="mRNA"/>
</dbReference>
<dbReference type="EMBL" id="AF070673">
    <property type="protein sequence ID" value="AAC83231.1"/>
    <property type="molecule type" value="mRNA"/>
</dbReference>
<dbReference type="EMBL" id="AL161976">
    <property type="protein sequence ID" value="CAB82314.1"/>
    <property type="molecule type" value="mRNA"/>
</dbReference>
<dbReference type="EMBL" id="AY325800">
    <property type="protein sequence ID" value="AAP78484.1"/>
    <property type="molecule type" value="Genomic_DNA"/>
</dbReference>
<dbReference type="EMBL" id="CR542127">
    <property type="protein sequence ID" value="CAG46924.1"/>
    <property type="molecule type" value="mRNA"/>
</dbReference>
<dbReference type="EMBL" id="CR542138">
    <property type="protein sequence ID" value="CAG46935.1"/>
    <property type="molecule type" value="mRNA"/>
</dbReference>
<dbReference type="EMBL" id="CH471112">
    <property type="protein sequence ID" value="EAW85146.1"/>
    <property type="molecule type" value="Genomic_DNA"/>
</dbReference>
<dbReference type="EMBL" id="CH471112">
    <property type="protein sequence ID" value="EAW85147.1"/>
    <property type="molecule type" value="Genomic_DNA"/>
</dbReference>
<dbReference type="EMBL" id="BC036100">
    <property type="protein sequence ID" value="AAH36100.1"/>
    <property type="molecule type" value="mRNA"/>
</dbReference>
<dbReference type="EMBL" id="BC036443">
    <property type="protein sequence ID" value="AAH36443.1"/>
    <property type="molecule type" value="mRNA"/>
</dbReference>
<dbReference type="CCDS" id="CCDS10549.1"/>
<dbReference type="PIR" id="T47139">
    <property type="entry name" value="T47139"/>
</dbReference>
<dbReference type="RefSeq" id="NP_003489.1">
    <property type="nucleotide sequence ID" value="NM_003498.6"/>
</dbReference>
<dbReference type="RefSeq" id="XP_016879231.1">
    <property type="nucleotide sequence ID" value="XM_017023742.1"/>
</dbReference>
<dbReference type="PDB" id="1ZZA">
    <property type="method" value="NMR"/>
    <property type="chains" value="A=1-88"/>
</dbReference>
<dbReference type="PDBsum" id="1ZZA"/>
<dbReference type="BMRB" id="O75324"/>
<dbReference type="SMR" id="O75324"/>
<dbReference type="BioGRID" id="113904">
    <property type="interactions" value="13"/>
</dbReference>
<dbReference type="FunCoup" id="O75324">
    <property type="interactions" value="337"/>
</dbReference>
<dbReference type="IntAct" id="O75324">
    <property type="interactions" value="4"/>
</dbReference>
<dbReference type="STRING" id="9606.ENSP00000329287"/>
<dbReference type="iPTMnet" id="O75324"/>
<dbReference type="PhosphoSitePlus" id="O75324"/>
<dbReference type="BioMuta" id="SNN"/>
<dbReference type="jPOST" id="O75324"/>
<dbReference type="MassIVE" id="O75324"/>
<dbReference type="PaxDb" id="9606-ENSP00000329287"/>
<dbReference type="PeptideAtlas" id="O75324"/>
<dbReference type="ProteomicsDB" id="49894"/>
<dbReference type="Antibodypedia" id="2691">
    <property type="antibodies" value="10 antibodies from 8 providers"/>
</dbReference>
<dbReference type="DNASU" id="8303"/>
<dbReference type="Ensembl" id="ENST00000329565.6">
    <property type="protein sequence ID" value="ENSP00000329287.5"/>
    <property type="gene ID" value="ENSG00000184602.6"/>
</dbReference>
<dbReference type="GeneID" id="8303"/>
<dbReference type="KEGG" id="hsa:8303"/>
<dbReference type="MANE-Select" id="ENST00000329565.6">
    <property type="protein sequence ID" value="ENSP00000329287.5"/>
    <property type="RefSeq nucleotide sequence ID" value="NM_003498.6"/>
    <property type="RefSeq protein sequence ID" value="NP_003489.1"/>
</dbReference>
<dbReference type="UCSC" id="uc002dbf.5">
    <property type="organism name" value="human"/>
</dbReference>
<dbReference type="AGR" id="HGNC:11149"/>
<dbReference type="CTD" id="8303"/>
<dbReference type="DisGeNET" id="8303"/>
<dbReference type="GeneCards" id="SNN"/>
<dbReference type="HGNC" id="HGNC:11149">
    <property type="gene designation" value="SNN"/>
</dbReference>
<dbReference type="HPA" id="ENSG00000184602">
    <property type="expression patterns" value="Tissue enhanced (brain, skeletal muscle)"/>
</dbReference>
<dbReference type="MIM" id="603032">
    <property type="type" value="gene"/>
</dbReference>
<dbReference type="neXtProt" id="NX_O75324"/>
<dbReference type="OpenTargets" id="ENSG00000184602"/>
<dbReference type="PharmGKB" id="PA35991"/>
<dbReference type="VEuPathDB" id="HostDB:ENSG00000184602"/>
<dbReference type="eggNOG" id="ENOG502S14Z">
    <property type="taxonomic scope" value="Eukaryota"/>
</dbReference>
<dbReference type="GeneTree" id="ENSGT00390000009447"/>
<dbReference type="HOGENOM" id="CLU_2711160_0_0_1"/>
<dbReference type="InParanoid" id="O75324"/>
<dbReference type="OMA" id="PCMERKA"/>
<dbReference type="OrthoDB" id="9448252at2759"/>
<dbReference type="PAN-GO" id="O75324">
    <property type="GO annotations" value="1 GO annotation based on evolutionary models"/>
</dbReference>
<dbReference type="PhylomeDB" id="O75324"/>
<dbReference type="TreeFam" id="TF336244"/>
<dbReference type="PathwayCommons" id="O75324"/>
<dbReference type="SignaLink" id="O75324"/>
<dbReference type="BioGRID-ORCS" id="8303">
    <property type="hits" value="9 hits in 1156 CRISPR screens"/>
</dbReference>
<dbReference type="ChiTaRS" id="SNN">
    <property type="organism name" value="human"/>
</dbReference>
<dbReference type="EvolutionaryTrace" id="O75324"/>
<dbReference type="GeneWiki" id="SNN_(gene)"/>
<dbReference type="GenomeRNAi" id="8303"/>
<dbReference type="Pharos" id="O75324">
    <property type="development level" value="Tdark"/>
</dbReference>
<dbReference type="PRO" id="PR:O75324"/>
<dbReference type="Proteomes" id="UP000005640">
    <property type="component" value="Chromosome 16"/>
</dbReference>
<dbReference type="RNAct" id="O75324">
    <property type="molecule type" value="protein"/>
</dbReference>
<dbReference type="Bgee" id="ENSG00000184602">
    <property type="expression patterns" value="Expressed in middle temporal gyrus and 207 other cell types or tissues"/>
</dbReference>
<dbReference type="GO" id="GO:0005737">
    <property type="term" value="C:cytoplasm"/>
    <property type="evidence" value="ECO:0000314"/>
    <property type="project" value="CAFA"/>
</dbReference>
<dbReference type="GO" id="GO:0016020">
    <property type="term" value="C:membrane"/>
    <property type="evidence" value="ECO:0000314"/>
    <property type="project" value="CAFA"/>
</dbReference>
<dbReference type="GO" id="GO:0005741">
    <property type="term" value="C:mitochondrial outer membrane"/>
    <property type="evidence" value="ECO:0007669"/>
    <property type="project" value="UniProtKB-SubCell"/>
</dbReference>
<dbReference type="GO" id="GO:0046872">
    <property type="term" value="F:metal ion binding"/>
    <property type="evidence" value="ECO:0000314"/>
    <property type="project" value="CAFA"/>
</dbReference>
<dbReference type="GO" id="GO:0009636">
    <property type="term" value="P:response to toxic substance"/>
    <property type="evidence" value="ECO:0000304"/>
    <property type="project" value="CAFA"/>
</dbReference>
<dbReference type="CDD" id="cd20257">
    <property type="entry name" value="Stannin"/>
    <property type="match status" value="1"/>
</dbReference>
<dbReference type="DisProt" id="DP00162"/>
<dbReference type="FunFam" id="4.10.280.20:FF:000001">
    <property type="entry name" value="stannin"/>
    <property type="match status" value="1"/>
</dbReference>
<dbReference type="Gene3D" id="4.10.280.20">
    <property type="entry name" value="membrane protein stannin"/>
    <property type="match status" value="1"/>
</dbReference>
<dbReference type="InterPro" id="IPR015137">
    <property type="entry name" value="SNN_cytoplasm"/>
</dbReference>
<dbReference type="InterPro" id="IPR015136">
    <property type="entry name" value="SNN_linker"/>
</dbReference>
<dbReference type="InterPro" id="IPR015135">
    <property type="entry name" value="SNN_transmemb"/>
</dbReference>
<dbReference type="InterPro" id="IPR038747">
    <property type="entry name" value="Stannin"/>
</dbReference>
<dbReference type="InterPro" id="IPR027435">
    <property type="entry name" value="Stannin_sf"/>
</dbReference>
<dbReference type="PANTHER" id="PTHR28564">
    <property type="entry name" value="STANNIN"/>
    <property type="match status" value="1"/>
</dbReference>
<dbReference type="PANTHER" id="PTHR28564:SF1">
    <property type="entry name" value="STANNIN"/>
    <property type="match status" value="1"/>
</dbReference>
<dbReference type="Pfam" id="PF09051">
    <property type="entry name" value="SNN_cytoplasm"/>
    <property type="match status" value="1"/>
</dbReference>
<dbReference type="Pfam" id="PF09050">
    <property type="entry name" value="SNN_linker"/>
    <property type="match status" value="1"/>
</dbReference>
<dbReference type="Pfam" id="PF09049">
    <property type="entry name" value="SNN_transmemb"/>
    <property type="match status" value="1"/>
</dbReference>
<name>SNN_HUMAN</name>